<dbReference type="SMR" id="C0HM17"/>
<dbReference type="GO" id="GO:0005576">
    <property type="term" value="C:extracellular region"/>
    <property type="evidence" value="ECO:0007669"/>
    <property type="project" value="UniProtKB-SubCell"/>
</dbReference>
<dbReference type="GO" id="GO:0019871">
    <property type="term" value="F:sodium channel inhibitor activity"/>
    <property type="evidence" value="ECO:0007669"/>
    <property type="project" value="InterPro"/>
</dbReference>
<dbReference type="GO" id="GO:0090729">
    <property type="term" value="F:toxin activity"/>
    <property type="evidence" value="ECO:0007669"/>
    <property type="project" value="UniProtKB-KW"/>
</dbReference>
<dbReference type="GO" id="GO:0006952">
    <property type="term" value="P:defense response"/>
    <property type="evidence" value="ECO:0007669"/>
    <property type="project" value="InterPro"/>
</dbReference>
<dbReference type="CDD" id="cd23106">
    <property type="entry name" value="neurotoxins_LC_scorpion"/>
    <property type="match status" value="1"/>
</dbReference>
<dbReference type="FunFam" id="3.30.30.10:FF:000002">
    <property type="entry name" value="Alpha-like toxin BmK-M1"/>
    <property type="match status" value="1"/>
</dbReference>
<dbReference type="Gene3D" id="3.30.30.10">
    <property type="entry name" value="Knottin, scorpion toxin-like"/>
    <property type="match status" value="1"/>
</dbReference>
<dbReference type="InterPro" id="IPR044062">
    <property type="entry name" value="LCN-type_CS_alpha_beta_dom"/>
</dbReference>
<dbReference type="InterPro" id="IPR003614">
    <property type="entry name" value="Scorpion_toxin-like"/>
</dbReference>
<dbReference type="InterPro" id="IPR036574">
    <property type="entry name" value="Scorpion_toxin-like_sf"/>
</dbReference>
<dbReference type="InterPro" id="IPR018218">
    <property type="entry name" value="Scorpion_toxinL"/>
</dbReference>
<dbReference type="InterPro" id="IPR002061">
    <property type="entry name" value="Scorpion_toxinL/defensin"/>
</dbReference>
<dbReference type="Pfam" id="PF00537">
    <property type="entry name" value="Toxin_3"/>
    <property type="match status" value="1"/>
</dbReference>
<dbReference type="PRINTS" id="PR00285">
    <property type="entry name" value="SCORPNTOXIN"/>
</dbReference>
<dbReference type="SMART" id="SM00505">
    <property type="entry name" value="Knot1"/>
    <property type="match status" value="1"/>
</dbReference>
<dbReference type="SUPFAM" id="SSF57095">
    <property type="entry name" value="Scorpion toxin-like"/>
    <property type="match status" value="1"/>
</dbReference>
<dbReference type="PROSITE" id="PS51863">
    <property type="entry name" value="LCN_CSAB"/>
    <property type="match status" value="1"/>
</dbReference>
<comment type="function">
    <text evidence="1 3">Beta toxins bind voltage-independently at site-4 of sodium channels (Nav) and shift the voltage of activation toward more negative potentials thereby affecting sodium channel activation and promoting spontaneous and repetitive firing (By similarity). Acts on human sodium channel Nav1.6/SCN8A (Ref.1). Also able to weakly shift the activation curves of human Nav1.2/SCN2A and Nav1.4/SCN4A (Ref.1).</text>
</comment>
<comment type="subcellular location">
    <subcellularLocation>
        <location evidence="2 3">Secreted</location>
    </subcellularLocation>
</comment>
<comment type="tissue specificity">
    <text evidence="6">Expressed by the venom gland.</text>
</comment>
<comment type="domain">
    <text evidence="5">Has the structural arrangement of an alpha-helix connected to antiparallel beta-sheets by disulfide bonds (CS-alpha/beta).</text>
</comment>
<comment type="mass spectrometry" mass="7496.7" method="Electrospray" evidence="3"/>
<comment type="toxic dose">
    <text evidence="3">LD(50) is 85 ug/kg in mouse.</text>
</comment>
<comment type="miscellaneous">
    <text evidence="3">Is neutralized by the single-chain antibody variable fragment 10FG2.</text>
</comment>
<comment type="miscellaneous">
    <text evidence="3">Abundance in venom is approximately 6.2%.</text>
</comment>
<comment type="similarity">
    <text evidence="5">Belongs to the long (4 C-C) scorpion toxin superfamily. Sodium channel inhibitor family. Beta subfamily.</text>
</comment>
<keyword id="KW-0903">Direct protein sequencing</keyword>
<keyword id="KW-1015">Disulfide bond</keyword>
<keyword id="KW-0872">Ion channel impairing toxin</keyword>
<keyword id="KW-0528">Neurotoxin</keyword>
<keyword id="KW-0964">Secreted</keyword>
<keyword id="KW-0800">Toxin</keyword>
<keyword id="KW-0738">Voltage-gated sodium channel impairing toxin</keyword>
<name>SCX4_CENHU</name>
<protein>
    <recommendedName>
        <fullName evidence="5">Beta-toxin Chui4</fullName>
    </recommendedName>
    <alternativeName>
        <fullName evidence="4">Chui4</fullName>
    </alternativeName>
</protein>
<proteinExistence type="evidence at protein level"/>
<sequence length="66" mass="7506">KEGYLVELGTGCKYECFKLGDNDYCLRECKAKYGKGAGGYCYAFGCWCTHLYEQAVVWPLKNKTCK</sequence>
<accession>C0HM17</accession>
<feature type="chain" id="PRO_0000456619" description="Beta-toxin Chui4" evidence="5">
    <location>
        <begin position="1" status="less than"/>
        <end position="66"/>
    </location>
</feature>
<feature type="domain" description="LCN-type CS-alpha/beta" evidence="2">
    <location>
        <begin position="1"/>
        <end position="66"/>
    </location>
</feature>
<feature type="disulfide bond" evidence="2 3">
    <location>
        <begin position="12"/>
        <end position="65"/>
    </location>
</feature>
<feature type="disulfide bond" evidence="2 3">
    <location>
        <begin position="16"/>
        <end position="41"/>
    </location>
</feature>
<feature type="disulfide bond" evidence="2 3">
    <location>
        <begin position="25"/>
        <end position="46"/>
    </location>
</feature>
<feature type="disulfide bond" evidence="2 3">
    <location>
        <begin position="29"/>
        <end position="48"/>
    </location>
</feature>
<feature type="non-terminal residue" evidence="5">
    <location>
        <position position="1"/>
    </location>
</feature>
<evidence type="ECO:0000250" key="1">
    <source>
        <dbReference type="UniProtKB" id="P45662"/>
    </source>
</evidence>
<evidence type="ECO:0000255" key="2">
    <source>
        <dbReference type="PROSITE-ProRule" id="PRU01210"/>
    </source>
</evidence>
<evidence type="ECO:0000269" key="3">
    <source ref="1"/>
</evidence>
<evidence type="ECO:0000303" key="4">
    <source ref="1"/>
</evidence>
<evidence type="ECO:0000305" key="5"/>
<evidence type="ECO:0000305" key="6">
    <source ref="1"/>
</evidence>
<organism>
    <name type="scientific">Centruroides huichol</name>
    <name type="common">Scorpion</name>
    <dbReference type="NCBI Taxonomy" id="2911785"/>
    <lineage>
        <taxon>Eukaryota</taxon>
        <taxon>Metazoa</taxon>
        <taxon>Ecdysozoa</taxon>
        <taxon>Arthropoda</taxon>
        <taxon>Chelicerata</taxon>
        <taxon>Arachnida</taxon>
        <taxon>Scorpiones</taxon>
        <taxon>Buthida</taxon>
        <taxon>Buthoidea</taxon>
        <taxon>Buthidae</taxon>
        <taxon>Centruroides</taxon>
    </lineage>
</organism>
<reference key="1">
    <citation type="journal article" date="2022" name="Toxins">
        <title>Characterization of Four Medically Important Toxins from Centruroides huichol Scorpion Venom and Its Neutralization by a Single Recombinant Antibody Fragment.</title>
        <authorList>
            <person name="Valencia-Martinez H."/>
            <person name="Olamendi-Portugal T."/>
            <person name="Restano-Cassulini R."/>
            <person name="Serrano-Posada H."/>
            <person name="Zamudio F."/>
            <person name="Possani L.D."/>
            <person name="Riano-Umbarila L."/>
            <person name="Becerril B."/>
        </authorList>
    </citation>
    <scope>PROTEIN SEQUENCE</scope>
    <scope>FUNCTION</scope>
    <scope>SUBCELLULAR LOCATION</scope>
    <scope>TISSUE SPECIFICITY</scope>
    <scope>MASS SPECTROMETRY</scope>
    <scope>TOXIC DOSE</scope>
    <scope>NEUTRALIZATION BY ANTIBODY</scope>
    <scope>DISULFIDE BOND</scope>
</reference>